<gene>
    <name type="primary">bphE</name>
</gene>
<protein>
    <recommendedName>
        <fullName>Biphenyl dioxygenase subunit beta</fullName>
        <ecNumber>1.14.12.18</ecNumber>
    </recommendedName>
    <alternativeName>
        <fullName>Biphenyl 2,3-dioxygenase</fullName>
    </alternativeName>
</protein>
<keyword id="KW-0002">3D-structure</keyword>
<keyword id="KW-0058">Aromatic hydrocarbons catabolism</keyword>
<keyword id="KW-0223">Dioxygenase</keyword>
<keyword id="KW-0520">NAD</keyword>
<keyword id="KW-0560">Oxidoreductase</keyword>
<evidence type="ECO:0000305" key="1"/>
<evidence type="ECO:0007829" key="2">
    <source>
        <dbReference type="PDB" id="3GZX"/>
    </source>
</evidence>
<reference key="1">
    <citation type="journal article" date="1996" name="Gene">
        <title>Sequencing of Comamonas testosteroni strain B-356-biphenyl/chlorobiphenyl dioxygenase genes: evolutionary relationships among Gram-negative bacterial biphenyl dioxygenases.</title>
        <authorList>
            <person name="Sylvestre M."/>
            <person name="Sirois M."/>
            <person name="Hurtubise Y."/>
            <person name="Bergeron J."/>
            <person name="Ahmad D."/>
            <person name="Shareck F."/>
            <person name="Barriault D."/>
            <person name="Guillemette I."/>
            <person name="Juteau J.-M."/>
        </authorList>
    </citation>
    <scope>NUCLEOTIDE SEQUENCE [GENOMIC DNA]</scope>
    <source>
        <strain>B-356</strain>
    </source>
</reference>
<proteinExistence type="evidence at protein level"/>
<sequence length="186" mass="21556">MISTPLSKEFEWPAKPVSLELQHQVEQFYYREAQLLDHHAFQAWFALLAEDIHYWMPIRTVRTAREQGLEYVPAGANAHFDDTHATMYGRIRQKTSDLNWAEDPPSRTRHLVSNVIVREMDTPGTLEVASAFLLYRSRLERQVDVFAGERRDVLRIADNPLGFQIAKRTIILDQSTVLANNLSVFF</sequence>
<dbReference type="EC" id="1.14.12.18"/>
<dbReference type="EMBL" id="U47637">
    <property type="protein sequence ID" value="AAC44527.1"/>
    <property type="molecule type" value="Genomic_DNA"/>
</dbReference>
<dbReference type="PIR" id="JC4994">
    <property type="entry name" value="JC4994"/>
</dbReference>
<dbReference type="PDB" id="3GZX">
    <property type="method" value="X-ray"/>
    <property type="resolution" value="1.58 A"/>
    <property type="chains" value="B=1-186"/>
</dbReference>
<dbReference type="PDB" id="3GZY">
    <property type="method" value="X-ray"/>
    <property type="resolution" value="1.62 A"/>
    <property type="chains" value="B=1-186"/>
</dbReference>
<dbReference type="PDBsum" id="3GZX"/>
<dbReference type="PDBsum" id="3GZY"/>
<dbReference type="SMR" id="Q46373"/>
<dbReference type="UniPathway" id="UPA00155">
    <property type="reaction ID" value="UER00250"/>
</dbReference>
<dbReference type="EvolutionaryTrace" id="Q46373"/>
<dbReference type="GO" id="GO:0018687">
    <property type="term" value="F:biphenyl 2,3-dioxygenase activity"/>
    <property type="evidence" value="ECO:0007669"/>
    <property type="project" value="UniProtKB-EC"/>
</dbReference>
<dbReference type="GO" id="GO:0019380">
    <property type="term" value="P:3-phenylpropionate catabolic process"/>
    <property type="evidence" value="ECO:0007669"/>
    <property type="project" value="TreeGrafter"/>
</dbReference>
<dbReference type="CDD" id="cd00667">
    <property type="entry name" value="ring_hydroxylating_dioxygenases_beta"/>
    <property type="match status" value="1"/>
</dbReference>
<dbReference type="Gene3D" id="3.10.450.50">
    <property type="match status" value="1"/>
</dbReference>
<dbReference type="InterPro" id="IPR032710">
    <property type="entry name" value="NTF2-like_dom_sf"/>
</dbReference>
<dbReference type="InterPro" id="IPR000391">
    <property type="entry name" value="Rng_hydr_dOase-bsu"/>
</dbReference>
<dbReference type="NCBIfam" id="NF007479">
    <property type="entry name" value="PRK10069.1"/>
    <property type="match status" value="1"/>
</dbReference>
<dbReference type="PANTHER" id="PTHR41534:SF2">
    <property type="entry name" value="3-PHENYLPROPIONATE_CINNAMIC ACID DIOXYGENASE SUBUNIT BETA"/>
    <property type="match status" value="1"/>
</dbReference>
<dbReference type="PANTHER" id="PTHR41534">
    <property type="entry name" value="BLR3401 PROTEIN"/>
    <property type="match status" value="1"/>
</dbReference>
<dbReference type="Pfam" id="PF00866">
    <property type="entry name" value="Ring_hydroxyl_B"/>
    <property type="match status" value="1"/>
</dbReference>
<dbReference type="SUPFAM" id="SSF54427">
    <property type="entry name" value="NTF2-like"/>
    <property type="match status" value="1"/>
</dbReference>
<accession>Q46373</accession>
<name>BPHE_COMTE</name>
<comment type="function">
    <text>The beta subunit may be responsible for the substrate specificity of the enzyme.</text>
</comment>
<comment type="catalytic activity">
    <reaction>
        <text>biphenyl + NADH + O2 + H(+) = (2R,3S)-3-phenylcyclohexa-3,5-diene-1,2-diol + NAD(+)</text>
        <dbReference type="Rhea" id="RHEA:18165"/>
        <dbReference type="ChEBI" id="CHEBI:15378"/>
        <dbReference type="ChEBI" id="CHEBI:15379"/>
        <dbReference type="ChEBI" id="CHEBI:17097"/>
        <dbReference type="ChEBI" id="CHEBI:32922"/>
        <dbReference type="ChEBI" id="CHEBI:57540"/>
        <dbReference type="ChEBI" id="CHEBI:57945"/>
        <dbReference type="EC" id="1.14.12.18"/>
    </reaction>
</comment>
<comment type="pathway">
    <text>Xenobiotic degradation; biphenyl degradation; 2-hydroxy-2,4-pentadienoate and benzoate from biphenyl: step 1/4.</text>
</comment>
<comment type="subunit">
    <text>Heterohexamer consisting of 3 BphA subunits and 3 BphE subunits. A ferredoxin (BphF) and a ferredoxin reductase (BphG) must be present to obtain activity.</text>
</comment>
<comment type="similarity">
    <text evidence="1">Belongs to the bacterial ring-hydroxylating dioxygenase beta subunit family.</text>
</comment>
<organism>
    <name type="scientific">Comamonas testosteroni</name>
    <name type="common">Pseudomonas testosteroni</name>
    <dbReference type="NCBI Taxonomy" id="285"/>
    <lineage>
        <taxon>Bacteria</taxon>
        <taxon>Pseudomonadati</taxon>
        <taxon>Pseudomonadota</taxon>
        <taxon>Betaproteobacteria</taxon>
        <taxon>Burkholderiales</taxon>
        <taxon>Comamonadaceae</taxon>
        <taxon>Comamonas</taxon>
    </lineage>
</organism>
<feature type="chain" id="PRO_0000085069" description="Biphenyl dioxygenase subunit beta">
    <location>
        <begin position="1"/>
        <end position="186"/>
    </location>
</feature>
<feature type="helix" evidence="2">
    <location>
        <begin position="19"/>
        <end position="37"/>
    </location>
</feature>
<feature type="helix" evidence="2">
    <location>
        <begin position="41"/>
        <end position="45"/>
    </location>
</feature>
<feature type="strand" evidence="2">
    <location>
        <begin position="48"/>
        <end position="57"/>
    </location>
</feature>
<feature type="helix" evidence="2">
    <location>
        <begin position="64"/>
        <end position="69"/>
    </location>
</feature>
<feature type="strand" evidence="2">
    <location>
        <begin position="78"/>
        <end position="82"/>
    </location>
</feature>
<feature type="helix" evidence="2">
    <location>
        <begin position="84"/>
        <end position="94"/>
    </location>
</feature>
<feature type="turn" evidence="2">
    <location>
        <begin position="95"/>
        <end position="97"/>
    </location>
</feature>
<feature type="helix" evidence="2">
    <location>
        <begin position="100"/>
        <end position="102"/>
    </location>
</feature>
<feature type="strand" evidence="2">
    <location>
        <begin position="107"/>
        <end position="119"/>
    </location>
</feature>
<feature type="strand" evidence="2">
    <location>
        <begin position="125"/>
        <end position="138"/>
    </location>
</feature>
<feature type="turn" evidence="2">
    <location>
        <begin position="139"/>
        <end position="141"/>
    </location>
</feature>
<feature type="strand" evidence="2">
    <location>
        <begin position="142"/>
        <end position="156"/>
    </location>
</feature>
<feature type="strand" evidence="2">
    <location>
        <begin position="162"/>
        <end position="173"/>
    </location>
</feature>
<feature type="strand" evidence="2">
    <location>
        <begin position="175"/>
        <end position="177"/>
    </location>
</feature>